<protein>
    <recommendedName>
        <fullName>Cycloartenol synthase</fullName>
        <shortName>LcCAS1</shortName>
        <ecNumber>5.4.99.8</ecNumber>
    </recommendedName>
</protein>
<organism>
    <name type="scientific">Luffa aegyptiaca</name>
    <name type="common">Sponge gourd</name>
    <name type="synonym">Luffa cylindrica</name>
    <dbReference type="NCBI Taxonomy" id="3670"/>
    <lineage>
        <taxon>Eukaryota</taxon>
        <taxon>Viridiplantae</taxon>
        <taxon>Streptophyta</taxon>
        <taxon>Embryophyta</taxon>
        <taxon>Tracheophyta</taxon>
        <taxon>Spermatophyta</taxon>
        <taxon>Magnoliopsida</taxon>
        <taxon>eudicotyledons</taxon>
        <taxon>Gunneridae</taxon>
        <taxon>Pentapetalae</taxon>
        <taxon>rosids</taxon>
        <taxon>fabids</taxon>
        <taxon>Cucurbitales</taxon>
        <taxon>Cucurbitaceae</taxon>
        <taxon>Sicyoeae</taxon>
        <taxon>Luffa</taxon>
    </lineage>
</organism>
<keyword id="KW-0413">Isomerase</keyword>
<keyword id="KW-0677">Repeat</keyword>
<name>CAS1_LUFAE</name>
<evidence type="ECO:0000250" key="1">
    <source>
        <dbReference type="UniProtKB" id="P48449"/>
    </source>
</evidence>
<evidence type="ECO:0000269" key="2">
    <source ref="1"/>
</evidence>
<evidence type="ECO:0000305" key="3"/>
<gene>
    <name type="primary">CAS1</name>
</gene>
<reference key="1">
    <citation type="online journal article" date="1999" name="Plant Gene Register">
        <title>Molecular cloning of a cDNA encoding cycloartenol synthase from Luffa cylindrica.</title>
        <authorList>
            <person name="Hayashi H."/>
            <person name="Hiraoka N."/>
            <person name="Ikeshiro Y."/>
            <person name="Yazaki K."/>
            <person name="Tanaka S."/>
            <person name="Kushiro T."/>
            <person name="Shibuya M."/>
            <person name="Ebizuka Y."/>
        </authorList>
        <locator>PGR99-183</locator>
    </citation>
    <scope>NUCLEOTIDE SEQUENCE [MRNA]</scope>
    <scope>FUNCTION</scope>
    <scope>CATALYTIC ACTIVITY</scope>
</reference>
<reference key="2">
    <citation type="journal article" date="2001" name="Eur. J. Biochem.">
        <title>Molecular cloning and characterization of isomultiflorenol synthase, a new triterpene synthase from Luffa cylindrica, involved in biosynthesis of bryonolic acid.</title>
        <authorList>
            <person name="Hayashi H."/>
            <person name="Huang P."/>
            <person name="Inoue K."/>
            <person name="Hiraoka N."/>
            <person name="Ikeshiro Y."/>
            <person name="Yazaki K."/>
            <person name="Tanaka S."/>
            <person name="Kushiro T."/>
            <person name="Shibuya M."/>
            <person name="Ebizuka Y."/>
        </authorList>
    </citation>
    <scope>INDUCTION</scope>
</reference>
<accession>Q9SLP9</accession>
<sequence length="765" mass="87146">MWQLKIGADTVPADPSNAGGWLSSLNNHVGRQVWHFHPELGTPEDLQQIQHARQRFSDHRFEKKHSADLLMRMQFAKNNSSFVNLPQIKVKDKEDVTEEAVSRTLRRAINFYSTIQGDDGHWPGDYGGPMFLIPGLVITLSITGALNAVLSTEHQREICRYLYNHQNKDGGWGLHIEGPSTMFGSVLNYVSLRLLGEEAEDGQGAVDKARKWILDHGGASAITSWGKMWLSVLGVYEWAGNNPLPPELWLLPYLLPFHPGRMWCHCRMVYLPMCYLYGKRFVGPITPIIRSLRKELYLVPYHEVDWNKARNECAKEDLYYPHPLVQDIVWASLHHVYEPLFMRWPAKRLREKALQCVMQHIHYEDENTRYICIGPVNKVLNMLCCWVEDPHSEAFKLHIPRIFDYLWIAEDGMKMQGYNGSQLWDTAFAVQAIMSTKLAEEYGTTLRKAHKYIKDSQVLEDCPGDLQSWYRHISKGAWPFSTADHGWPISDCTAEGLKAVLLLSKLPSEIVGKSIDEEQIYDAVNVILSLQNTDGGFATYELTRSYPWLELMNPAETFGDIVIDYTYVECTSAAIQALVAFKKLYPGHRRDEIDNCVAKAADFIESIQATDGSWYGSWGVCFTYGGWFGIRGLVAAGRRYDNCSSLRKACDFLLSKELASGGWGESYLSGQNKVYTNIKDDRPHIVNTGWAMLSLIDAGQSERDPTPLHRAARILINSQMDDGDFPQEEIMGIFNKNCMISYAAYRNIFPIWALGEYRCRVLQAP</sequence>
<dbReference type="EC" id="5.4.99.8"/>
<dbReference type="EMBL" id="AB033334">
    <property type="protein sequence ID" value="BAA85266.1"/>
    <property type="molecule type" value="mRNA"/>
</dbReference>
<dbReference type="SMR" id="Q9SLP9"/>
<dbReference type="GO" id="GO:0005811">
    <property type="term" value="C:lipid droplet"/>
    <property type="evidence" value="ECO:0007669"/>
    <property type="project" value="InterPro"/>
</dbReference>
<dbReference type="GO" id="GO:0016871">
    <property type="term" value="F:cycloartenol synthase activity"/>
    <property type="evidence" value="ECO:0007669"/>
    <property type="project" value="UniProtKB-EC"/>
</dbReference>
<dbReference type="GO" id="GO:0016104">
    <property type="term" value="P:triterpenoid biosynthetic process"/>
    <property type="evidence" value="ECO:0007669"/>
    <property type="project" value="InterPro"/>
</dbReference>
<dbReference type="CDD" id="cd02892">
    <property type="entry name" value="SQCY_1"/>
    <property type="match status" value="1"/>
</dbReference>
<dbReference type="FunFam" id="1.50.10.20:FF:000002">
    <property type="entry name" value="Terpene cyclase/mutase family member"/>
    <property type="match status" value="1"/>
</dbReference>
<dbReference type="FunFam" id="1.50.10.20:FF:000022">
    <property type="entry name" value="Terpene cyclase/mutase family member"/>
    <property type="match status" value="1"/>
</dbReference>
<dbReference type="Gene3D" id="1.50.10.20">
    <property type="match status" value="3"/>
</dbReference>
<dbReference type="InterPro" id="IPR032696">
    <property type="entry name" value="SQ_cyclase_C"/>
</dbReference>
<dbReference type="InterPro" id="IPR032697">
    <property type="entry name" value="SQ_cyclase_N"/>
</dbReference>
<dbReference type="InterPro" id="IPR018333">
    <property type="entry name" value="Squalene_cyclase"/>
</dbReference>
<dbReference type="InterPro" id="IPR002365">
    <property type="entry name" value="Terpene_synthase_CS"/>
</dbReference>
<dbReference type="InterPro" id="IPR008930">
    <property type="entry name" value="Terpenoid_cyclase/PrenylTrfase"/>
</dbReference>
<dbReference type="NCBIfam" id="TIGR01787">
    <property type="entry name" value="squalene_cyclas"/>
    <property type="match status" value="1"/>
</dbReference>
<dbReference type="PANTHER" id="PTHR11764">
    <property type="entry name" value="TERPENE CYCLASE/MUTASE FAMILY MEMBER"/>
    <property type="match status" value="1"/>
</dbReference>
<dbReference type="PANTHER" id="PTHR11764:SF85">
    <property type="entry name" value="TERPENE CYCLASE_MUTASE FAMILY MEMBER"/>
    <property type="match status" value="1"/>
</dbReference>
<dbReference type="Pfam" id="PF13243">
    <property type="entry name" value="SQHop_cyclase_C"/>
    <property type="match status" value="1"/>
</dbReference>
<dbReference type="Pfam" id="PF13249">
    <property type="entry name" value="SQHop_cyclase_N"/>
    <property type="match status" value="1"/>
</dbReference>
<dbReference type="SFLD" id="SFLDG01016">
    <property type="entry name" value="Prenyltransferase_Like_2"/>
    <property type="match status" value="1"/>
</dbReference>
<dbReference type="SUPFAM" id="SSF48239">
    <property type="entry name" value="Terpenoid cyclases/Protein prenyltransferases"/>
    <property type="match status" value="2"/>
</dbReference>
<dbReference type="PROSITE" id="PS01074">
    <property type="entry name" value="TERPENE_SYNTHASES"/>
    <property type="match status" value="1"/>
</dbReference>
<feature type="chain" id="PRO_0000412992" description="Cycloartenol synthase">
    <location>
        <begin position="1"/>
        <end position="765"/>
    </location>
</feature>
<feature type="repeat" description="PFTB 1">
    <location>
        <begin position="155"/>
        <end position="196"/>
    </location>
</feature>
<feature type="repeat" description="PFTB 2">
    <location>
        <begin position="520"/>
        <end position="565"/>
    </location>
</feature>
<feature type="repeat" description="PFTB 3">
    <location>
        <begin position="597"/>
        <end position="637"/>
    </location>
</feature>
<feature type="repeat" description="PFTB 4">
    <location>
        <begin position="646"/>
        <end position="687"/>
    </location>
</feature>
<feature type="active site" description="Proton donor" evidence="1">
    <location>
        <position position="491"/>
    </location>
</feature>
<proteinExistence type="evidence at protein level"/>
<comment type="function">
    <text evidence="2">Oxidosqualene cyclase involved in the biosynthesis of cycloartenol.</text>
</comment>
<comment type="catalytic activity">
    <reaction evidence="2">
        <text>(S)-2,3-epoxysqualene = cycloartenol</text>
        <dbReference type="Rhea" id="RHEA:21308"/>
        <dbReference type="ChEBI" id="CHEBI:15441"/>
        <dbReference type="ChEBI" id="CHEBI:17030"/>
        <dbReference type="EC" id="5.4.99.8"/>
    </reaction>
</comment>
<comment type="miscellaneous">
    <text>In cultured cells, CAS1 mRNA expression is high between days 4 and 8 and decreases at later growth stages.</text>
</comment>
<comment type="similarity">
    <text evidence="3">Belongs to the terpene cyclase/mutase family.</text>
</comment>